<comment type="function">
    <text evidence="1">Produces ATP from ADP in the presence of a proton gradient across the membrane. The gamma chain is believed to be important in regulating ATPase activity and the flow of protons through the CF(0) complex.</text>
</comment>
<comment type="subunit">
    <text evidence="1">F-type ATPases have 2 components, CF(1) - the catalytic core - and CF(0) - the membrane proton channel. CF(1) has five subunits: alpha(3), beta(3), gamma(1), delta(1), epsilon(1). CF(0) has three main subunits: a, b and c.</text>
</comment>
<comment type="subcellular location">
    <subcellularLocation>
        <location evidence="1">Cell inner membrane</location>
        <topology evidence="1">Peripheral membrane protein</topology>
    </subcellularLocation>
</comment>
<comment type="similarity">
    <text evidence="1">Belongs to the ATPase gamma chain family.</text>
</comment>
<keyword id="KW-0066">ATP synthesis</keyword>
<keyword id="KW-0997">Cell inner membrane</keyword>
<keyword id="KW-1003">Cell membrane</keyword>
<keyword id="KW-0139">CF(1)</keyword>
<keyword id="KW-0375">Hydrogen ion transport</keyword>
<keyword id="KW-0406">Ion transport</keyword>
<keyword id="KW-0472">Membrane</keyword>
<keyword id="KW-0813">Transport</keyword>
<protein>
    <recommendedName>
        <fullName evidence="1">ATP synthase gamma chain</fullName>
    </recommendedName>
    <alternativeName>
        <fullName evidence="1">ATP synthase F1 sector gamma subunit</fullName>
    </alternativeName>
    <alternativeName>
        <fullName evidence="1">F-ATPase gamma subunit</fullName>
    </alternativeName>
</protein>
<reference key="1">
    <citation type="journal article" date="2010" name="J. Bacteriol.">
        <title>Whole genome sequences of two Xylella fastidiosa strains (M12 and M23) causing almond leaf scorch disease in California.</title>
        <authorList>
            <person name="Chen J."/>
            <person name="Xie G."/>
            <person name="Han S."/>
            <person name="Chertkov O."/>
            <person name="Sims D."/>
            <person name="Civerolo E.L."/>
        </authorList>
    </citation>
    <scope>NUCLEOTIDE SEQUENCE [LARGE SCALE GENOMIC DNA]</scope>
    <source>
        <strain>M23</strain>
    </source>
</reference>
<gene>
    <name evidence="1" type="primary">atpG</name>
    <name type="ordered locus">XfasM23_0425</name>
</gene>
<sequence>MASGREIKSKIKSVQNTRKVTRALEMVSASKIRKAQEQMKISRPYAQAMKQMIGHLAQANTEYLHPFLIAHKQVKRIGYIVISSDRGLAGGLNNNLFRKMLGEMHQWQDNGAEVDIVTIGQKASVFFRRIKVNILGSVTHLGDTPRLEQLIGVIKVMLDAYTEEKLDRVYLVYNHFINTMVQKASFDQLLPLLAAKDKVAHHDWDYLYEPDAATVLEHVMTRYIESLVYQAMLENIASEHAARMVAMKAASDNANKLIGTLQLVYNKARQAAITQEISEIVGGAAAV</sequence>
<name>ATPG_XYLF2</name>
<organism>
    <name type="scientific">Xylella fastidiosa (strain M23)</name>
    <dbReference type="NCBI Taxonomy" id="405441"/>
    <lineage>
        <taxon>Bacteria</taxon>
        <taxon>Pseudomonadati</taxon>
        <taxon>Pseudomonadota</taxon>
        <taxon>Gammaproteobacteria</taxon>
        <taxon>Lysobacterales</taxon>
        <taxon>Lysobacteraceae</taxon>
        <taxon>Xylella</taxon>
    </lineage>
</organism>
<proteinExistence type="inferred from homology"/>
<feature type="chain" id="PRO_1000134224" description="ATP synthase gamma chain">
    <location>
        <begin position="1"/>
        <end position="287"/>
    </location>
</feature>
<evidence type="ECO:0000255" key="1">
    <source>
        <dbReference type="HAMAP-Rule" id="MF_00815"/>
    </source>
</evidence>
<dbReference type="EMBL" id="CP001011">
    <property type="protein sequence ID" value="ACB91872.1"/>
    <property type="molecule type" value="Genomic_DNA"/>
</dbReference>
<dbReference type="RefSeq" id="WP_004090070.1">
    <property type="nucleotide sequence ID" value="NC_010577.1"/>
</dbReference>
<dbReference type="SMR" id="B2I861"/>
<dbReference type="KEGG" id="xfn:XfasM23_0425"/>
<dbReference type="HOGENOM" id="CLU_050669_0_1_6"/>
<dbReference type="Proteomes" id="UP000001698">
    <property type="component" value="Chromosome"/>
</dbReference>
<dbReference type="GO" id="GO:0005886">
    <property type="term" value="C:plasma membrane"/>
    <property type="evidence" value="ECO:0007669"/>
    <property type="project" value="UniProtKB-SubCell"/>
</dbReference>
<dbReference type="GO" id="GO:0045259">
    <property type="term" value="C:proton-transporting ATP synthase complex"/>
    <property type="evidence" value="ECO:0007669"/>
    <property type="project" value="UniProtKB-KW"/>
</dbReference>
<dbReference type="GO" id="GO:0005524">
    <property type="term" value="F:ATP binding"/>
    <property type="evidence" value="ECO:0007669"/>
    <property type="project" value="UniProtKB-UniRule"/>
</dbReference>
<dbReference type="GO" id="GO:0046933">
    <property type="term" value="F:proton-transporting ATP synthase activity, rotational mechanism"/>
    <property type="evidence" value="ECO:0007669"/>
    <property type="project" value="UniProtKB-UniRule"/>
</dbReference>
<dbReference type="GO" id="GO:0042777">
    <property type="term" value="P:proton motive force-driven plasma membrane ATP synthesis"/>
    <property type="evidence" value="ECO:0007669"/>
    <property type="project" value="UniProtKB-UniRule"/>
</dbReference>
<dbReference type="CDD" id="cd12151">
    <property type="entry name" value="F1-ATPase_gamma"/>
    <property type="match status" value="1"/>
</dbReference>
<dbReference type="FunFam" id="1.10.287.80:FF:000005">
    <property type="entry name" value="ATP synthase gamma chain"/>
    <property type="match status" value="1"/>
</dbReference>
<dbReference type="Gene3D" id="3.40.1380.10">
    <property type="match status" value="1"/>
</dbReference>
<dbReference type="Gene3D" id="1.10.287.80">
    <property type="entry name" value="ATP synthase, gamma subunit, helix hairpin domain"/>
    <property type="match status" value="1"/>
</dbReference>
<dbReference type="HAMAP" id="MF_00815">
    <property type="entry name" value="ATP_synth_gamma_bact"/>
    <property type="match status" value="1"/>
</dbReference>
<dbReference type="InterPro" id="IPR035968">
    <property type="entry name" value="ATP_synth_F1_ATPase_gsu"/>
</dbReference>
<dbReference type="InterPro" id="IPR000131">
    <property type="entry name" value="ATP_synth_F1_gsu"/>
</dbReference>
<dbReference type="InterPro" id="IPR023632">
    <property type="entry name" value="ATP_synth_F1_gsu_CS"/>
</dbReference>
<dbReference type="NCBIfam" id="TIGR01146">
    <property type="entry name" value="ATPsyn_F1gamma"/>
    <property type="match status" value="1"/>
</dbReference>
<dbReference type="NCBIfam" id="NF004144">
    <property type="entry name" value="PRK05621.1-1"/>
    <property type="match status" value="1"/>
</dbReference>
<dbReference type="PANTHER" id="PTHR11693">
    <property type="entry name" value="ATP SYNTHASE GAMMA CHAIN"/>
    <property type="match status" value="1"/>
</dbReference>
<dbReference type="PANTHER" id="PTHR11693:SF22">
    <property type="entry name" value="ATP SYNTHASE SUBUNIT GAMMA, MITOCHONDRIAL"/>
    <property type="match status" value="1"/>
</dbReference>
<dbReference type="Pfam" id="PF00231">
    <property type="entry name" value="ATP-synt"/>
    <property type="match status" value="1"/>
</dbReference>
<dbReference type="PRINTS" id="PR00126">
    <property type="entry name" value="ATPASEGAMMA"/>
</dbReference>
<dbReference type="SUPFAM" id="SSF52943">
    <property type="entry name" value="ATP synthase (F1-ATPase), gamma subunit"/>
    <property type="match status" value="1"/>
</dbReference>
<dbReference type="PROSITE" id="PS00153">
    <property type="entry name" value="ATPASE_GAMMA"/>
    <property type="match status" value="1"/>
</dbReference>
<accession>B2I861</accession>